<reference key="1">
    <citation type="journal article" date="1999" name="Gene">
        <title>Molecular cloning and characterization of porcine cDNA encoding a 90-kDa heat shock protein and its expression following hyperthermia.</title>
        <authorList>
            <person name="Huang H.W."/>
            <person name="Lee W.C."/>
            <person name="Lin J.H."/>
            <person name="Jian S.C."/>
            <person name="Mao S.J."/>
            <person name="Yang P.C."/>
            <person name="Huang T.Y."/>
            <person name="Liu Y.C."/>
        </authorList>
    </citation>
    <scope>NUCLEOTIDE SEQUENCE [MRNA]</scope>
    <source>
        <tissue>Brain</tissue>
    </source>
</reference>
<organism>
    <name type="scientific">Sus scrofa</name>
    <name type="common">Pig</name>
    <dbReference type="NCBI Taxonomy" id="9823"/>
    <lineage>
        <taxon>Eukaryota</taxon>
        <taxon>Metazoa</taxon>
        <taxon>Chordata</taxon>
        <taxon>Craniata</taxon>
        <taxon>Vertebrata</taxon>
        <taxon>Euteleostomi</taxon>
        <taxon>Mammalia</taxon>
        <taxon>Eutheria</taxon>
        <taxon>Laurasiatheria</taxon>
        <taxon>Artiodactyla</taxon>
        <taxon>Suina</taxon>
        <taxon>Suidae</taxon>
        <taxon>Sus</taxon>
    </lineage>
</organism>
<evidence type="ECO:0000250" key="1"/>
<evidence type="ECO:0000250" key="2">
    <source>
        <dbReference type="UniProtKB" id="P07900"/>
    </source>
</evidence>
<evidence type="ECO:0000250" key="3">
    <source>
        <dbReference type="UniProtKB" id="P07901"/>
    </source>
</evidence>
<evidence type="ECO:0000250" key="4">
    <source>
        <dbReference type="UniProtKB" id="P82995"/>
    </source>
</evidence>
<evidence type="ECO:0000256" key="5">
    <source>
        <dbReference type="SAM" id="MobiDB-lite"/>
    </source>
</evidence>
<evidence type="ECO:0000305" key="6"/>
<gene>
    <name type="primary">HSP90AA1</name>
    <name type="synonym">HSP90A</name>
    <name type="synonym">HSPCA</name>
</gene>
<sequence length="733" mass="84775">MPEETQTQDQPMEEEEVETFAFQAEIAQLMSLIINTFYSNKEIFLRELISNSSDALDKIRYESLTDPSKLDSGKELHINLIPNKQDRTLTIVDTGIGMTKADLINNLGTIAKSGTKAFMEALQAGADISMIGQFGVGFYSAYLVAEKVTVITKHNDDEQYAWESSAGGSFTVRTDTGEPMGRGTKVILHLKEDQTEYLEERRIKEIVKKHSQFIGYPITLFVEKERDKEVSDDEAEEKEDKEEEKEKEEKESEDKPEIEDVGSDEEEEEKKDGDKKKKKKIKEKYIDQEELNKTKPIWTRNPDDITNEEYGEFYKSLTNDWEDHLAVKHFSVEGQLEFRALLFVPRRAPFDLFENRKKKNNIKLYVRRVFIMDNCEELIPEYLNFIRGVVDSEDLPLNISREMLQQSKILKVIRKNLVKKCLELFTELAEDKENYKKFYEQFSKNIKLGIHEDSQNRKKLSELLRYYTSASGDEMVSLKDYCTRMKENQKHIYYITGETKDQVANSAFVERLRKHGLEVIYMIEPIDEYCVQQLKEFEGKTLVSVTKEGLELPEDEEEKKKQEEKKTKFENLCKIMKDILEKKVEKVVVSNRLVTSPCCIVTSTYGWTANMERIMKAQALRDNSTMGYMAAKKHLEINPDHSIIETLRQKAEADKNDKSVKDLVILLYETALLSSGFSLEDPQTHANRIYRMIKLGLGIDEDDPTADDSSAAVTEEMPPLEGDDDTSRMEEVD</sequence>
<feature type="chain" id="PRO_0000062913" description="Heat shock protein HSP 90-alpha">
    <location>
        <begin position="1"/>
        <end position="733"/>
    </location>
</feature>
<feature type="region of interest" description="Interaction with NR3C1" evidence="3">
    <location>
        <begin position="9"/>
        <end position="236"/>
    </location>
</feature>
<feature type="region of interest" description="Disordered" evidence="5">
    <location>
        <begin position="225"/>
        <end position="279"/>
    </location>
</feature>
<feature type="region of interest" description="Interaction with NR3C1" evidence="3">
    <location>
        <begin position="272"/>
        <end position="617"/>
    </location>
</feature>
<feature type="region of interest" description="Interaction with FLCN and FNIP1" evidence="2">
    <location>
        <begin position="285"/>
        <end position="733"/>
    </location>
</feature>
<feature type="region of interest" description="Interaction with FNIP2 and TSC1" evidence="2">
    <location>
        <begin position="285"/>
        <end position="621"/>
    </location>
</feature>
<feature type="region of interest" description="Interaction with NR1D1" evidence="3">
    <location>
        <begin position="629"/>
        <end position="732"/>
    </location>
</feature>
<feature type="region of interest" description="Required for homodimerization" evidence="2">
    <location>
        <begin position="683"/>
        <end position="733"/>
    </location>
</feature>
<feature type="region of interest" description="Disordered" evidence="5">
    <location>
        <begin position="700"/>
        <end position="733"/>
    </location>
</feature>
<feature type="region of interest" description="Essential for interaction with SMYD3, TSC1 and STIP1/HOP" evidence="2">
    <location>
        <begin position="729"/>
        <end position="733"/>
    </location>
</feature>
<feature type="region of interest" description="Essential for interaction with SGTA and TTC1" evidence="2">
    <location>
        <begin position="730"/>
        <end position="733"/>
    </location>
</feature>
<feature type="short sequence motif" description="TPR repeat-binding" evidence="2">
    <location>
        <begin position="724"/>
        <end position="733"/>
    </location>
</feature>
<feature type="compositionally biased region" description="Acidic residues" evidence="5">
    <location>
        <begin position="230"/>
        <end position="246"/>
    </location>
</feature>
<feature type="compositionally biased region" description="Acidic residues" evidence="5">
    <location>
        <begin position="256"/>
        <end position="269"/>
    </location>
</feature>
<feature type="binding site" evidence="1">
    <location>
        <position position="51"/>
    </location>
    <ligand>
        <name>ATP</name>
        <dbReference type="ChEBI" id="CHEBI:30616"/>
    </ligand>
</feature>
<feature type="binding site" evidence="1">
    <location>
        <position position="93"/>
    </location>
    <ligand>
        <name>ATP</name>
        <dbReference type="ChEBI" id="CHEBI:30616"/>
    </ligand>
</feature>
<feature type="binding site" evidence="1">
    <location>
        <position position="112"/>
    </location>
    <ligand>
        <name>ATP</name>
        <dbReference type="ChEBI" id="CHEBI:30616"/>
    </ligand>
</feature>
<feature type="binding site" evidence="1">
    <location>
        <position position="138"/>
    </location>
    <ligand>
        <name>ATP</name>
        <dbReference type="ChEBI" id="CHEBI:30616"/>
    </ligand>
</feature>
<feature type="binding site" evidence="1">
    <location>
        <position position="401"/>
    </location>
    <ligand>
        <name>ATP</name>
        <dbReference type="ChEBI" id="CHEBI:30616"/>
    </ligand>
</feature>
<feature type="modified residue" description="Phosphothreonine; by PRKDC" evidence="2">
    <location>
        <position position="5"/>
    </location>
</feature>
<feature type="modified residue" description="Phosphothreonine; by PRKDC" evidence="2">
    <location>
        <position position="7"/>
    </location>
</feature>
<feature type="modified residue" description="N6-acetyllysine" evidence="3">
    <location>
        <position position="58"/>
    </location>
</feature>
<feature type="modified residue" description="N6-acetyllysine" evidence="3">
    <location>
        <position position="84"/>
    </location>
</feature>
<feature type="modified residue" description="Phosphoserine" evidence="2">
    <location>
        <position position="231"/>
    </location>
</feature>
<feature type="modified residue" description="Phosphoserine" evidence="2">
    <location>
        <position position="252"/>
    </location>
</feature>
<feature type="modified residue" description="Phosphoserine" evidence="2">
    <location>
        <position position="263"/>
    </location>
</feature>
<feature type="modified residue" description="Phosphotyrosine" evidence="3">
    <location>
        <position position="314"/>
    </location>
</feature>
<feature type="modified residue" description="N6-acetyllysine" evidence="2">
    <location>
        <position position="444"/>
    </location>
</feature>
<feature type="modified residue" description="Phosphoserine" evidence="4">
    <location>
        <position position="454"/>
    </location>
</feature>
<feature type="modified residue" description="N6-acetyllysine" evidence="2">
    <location>
        <position position="459"/>
    </location>
</feature>
<feature type="modified residue" description="Phosphoserine" evidence="2">
    <location>
        <position position="477"/>
    </location>
</feature>
<feature type="modified residue" description="N6-acetyllysine" evidence="2">
    <location>
        <position position="490"/>
    </location>
</feature>
<feature type="modified residue" description="Phosphotyrosine" evidence="3">
    <location>
        <position position="493"/>
    </location>
</feature>
<feature type="modified residue" description="N6-acetyllysine" evidence="2">
    <location>
        <position position="586"/>
    </location>
</feature>
<feature type="modified residue" description="S-nitrosocysteine" evidence="2">
    <location>
        <position position="599"/>
    </location>
</feature>
<feature type="modified residue" description="Phosphoserine" evidence="2">
    <location>
        <position position="642"/>
    </location>
</feature>
<accession>O02705</accession>
<name>HS90A_PIG</name>
<comment type="function">
    <text evidence="2">Molecular chaperone that promotes the maturation, structural maintenance and proper regulation of specific target proteins involved for instance in cell cycle control and signal transduction. Undergoes a functional cycle that is linked to its ATPase activity which is essential for its chaperone activity. This cycle probably induces conformational changes in the client proteins, thereby causing their activation. Interacts dynamically with various co-chaperones that modulate its substrate recognition, ATPase cycle and chaperone function. Engages with a range of client protein classes via its interaction with various co-chaperone proteins or complexes, that act as adapters, simultaneously able to interact with the specific client and the central chaperone itself. Recruitment of ATP and co-chaperone followed by client protein forms a functional chaperone. After the completion of the chaperoning process, properly folded client protein and co-chaperone leave HSP90 in an ADP-bound partially open conformation and finally, ADP is released from HSP90 which acquires an open conformation for the next cycle. Plays a critical role in mitochondrial import, delivers preproteins to the mitochondrial import receptor TOMM70. Apart from its chaperone activity, it also plays a role in the regulation of the transcription machinery. HSP90 and its co-chaperones modulate transcription at least at three different levels. In the first place, they alter the steady-state levels of certain transcription factors in response to various physiological cues. Second, they modulate the activity of certain epigenetic modifiers, such as histone deacetylases or DNA methyl transferases, and thereby respond to the change in the environment. Third, they participate in the eviction of histones from the promoter region of certain genes and thereby turn on gene expression. Binds bacterial lipopolysaccharide (LPS) and mediates LPS-induced inflammatory response, including TNF secretion by monocytes. Antagonizes STUB1-mediated inhibition of TGF-beta signaling via inhibition of STUB1-mediated SMAD3 ubiquitination and degradation. Mediates the association of TOMM70 with IRF3 or TBK1 in mitochondrial outer membrane which promotes host antiviral response.</text>
</comment>
<comment type="catalytic activity">
    <reaction evidence="2">
        <text>ATP + H2O = ADP + phosphate + H(+)</text>
        <dbReference type="Rhea" id="RHEA:13065"/>
        <dbReference type="ChEBI" id="CHEBI:15377"/>
        <dbReference type="ChEBI" id="CHEBI:15378"/>
        <dbReference type="ChEBI" id="CHEBI:30616"/>
        <dbReference type="ChEBI" id="CHEBI:43474"/>
        <dbReference type="ChEBI" id="CHEBI:456216"/>
        <dbReference type="EC" id="3.6.4.10"/>
    </reaction>
</comment>
<comment type="activity regulation">
    <text evidence="2">In the resting state, through the dimerization of its C-terminal domain, HSP90 forms a homodimer which is defined as the open conformation. Upon ATP-binding, the N-terminal domain undergoes significant conformational changes and comes in contact to form an active closed conformation. After HSP90 finishes its chaperoning tasks of assisting the proper folding, stabilization and activation of client proteins under the active state, ATP molecule is hydrolyzed to ADP which then dissociates from HSP90 and directs the protein back to the resting state. Co-chaperone TSC1 promotes ATP binding and inhibits HSP90AA1 ATPase activity. Binding to phosphorylated AHSA1 promotes HSP90AA1 ATPase activity. Inhibited by geldanamycin, Ganetespib (STA-9090) and SNX-2112.</text>
</comment>
<comment type="subunit">
    <text evidence="2 3 4">Homodimer. Identified in NR3C1/GCR steroid receptor-chaperone complexes formed at least by NR3C1, HSP90AA1 and a variety of proteins containing TPR repeats such as FKBP4, FKBP5, PPID, PPP5C or STIP1. Forms a complex containing HSP90AA1, TSC1 and TSC2; TSC1 is required to recruit TCS2 to the complex. The closed form interacts (via the middle domain and TPR repeat-binding motif) with co-chaperone TSC1 (via C-terminus). Interacts with TOM34. Interacts with TERT; the interaction, together with PTGES3, is required for correct assembly and stabilization of the TERT holoenzyme complex. Interacts with CHORDC1 and DNAJC7. Interacts with STUB1 and UBE2N; may couple the chaperone and ubiquitination systems. Interacts (via TPR repeat-binding motif) with PPP5C (via TPR repeats); the interaction is direct and activates PPP5C phosphatase activity. Following LPS binding, may form a complex with CXCR4, GDF5 and HSPA8. Interacts with KSR1. Interacts with co-chaperone CDC37 (via C-terminus); the interaction inhibits HSP90AA1 ATPase activity. May interact with NWD1. Interacts with FNIP1 and FNIP2; the interaction inhibits HSP90AA1 ATPase activity. Interacts with co-chaperone AHSA1 (phosphorylated on 'Tyr-223'); the interaction activates HSP90AA1 ATPase activity and results in the dissociation of TSC1 from HSP90AA1. Interacts with FLCN in the presence of FNIP1. Interacts with HSP70, STIP1 and PTGES3. Interacts with SMYD3; this interaction enhances SMYD3 histone-lysine N-methyltransferase. Interacts with SGTA (via TPR repeats). Interacts with TTC1 (via TPR repeats). Interacts with HSF1 in an ATP-dependent manner. Interacts with MET; the interaction suppresses MET kinase activity. Interacts with ERBB2 in an ATP-dependent manner; the interaction suppresses ERBB2 kinase activity. Interacts with HIF1A, KEAP1 and RHOBTB2. Interacts with HSF1; this interaction is decreased in a IER5-dependent manner, promoting HSF1 accumulation in the nucleus, homotrimerization and DNA-binding activities. Interacts with STUB1 and SMAD3. Interacts with HSP90AB1; interaction is constitutive (By similarity). Interacts with HECTD1 (via N-terminus) (By similarity). Interacts with NR3C1 (via domain NR LBD) and NR1D1 (via domain NR LBD) (By similarity). Interacts with NLPR12 (By similarity). Interacts with PDCL3 (By similarity). Interacts with TOMM70; the interaction is required for preprotein mitochondrial import. Interacts with TOMM70, IRF3 and TBK1; the interactions are direct and mediate the association of TOMM70 with IRF3 and TBK1 (By similarity). Forms a complex with ASL, ASS1 and NOS2; the complex regulates cell-autonomous L-arginine synthesis and citrulline recycling while channeling extracellular L-arginine to nitric oxide synthesis pathway.</text>
</comment>
<comment type="subcellular location">
    <subcellularLocation>
        <location evidence="3">Nucleus</location>
    </subcellularLocation>
    <subcellularLocation>
        <location evidence="3">Cytoplasm</location>
    </subcellularLocation>
    <subcellularLocation>
        <location evidence="2">Melanosome</location>
    </subcellularLocation>
    <subcellularLocation>
        <location evidence="2">Cell membrane</location>
    </subcellularLocation>
    <subcellularLocation>
        <location evidence="2">Mitochondrion</location>
    </subcellularLocation>
</comment>
<comment type="tissue specificity">
    <text>Preferentially expressed in pituitary gland, brain, adrenal gland, and testis, in comparison to other tissues.</text>
</comment>
<comment type="domain">
    <text evidence="2">The TPR repeat-binding motif mediates interaction with TPR repeat-containing proteins like the co-chaperone STUB1.</text>
</comment>
<comment type="PTM">
    <text evidence="2">ISGylated.</text>
</comment>
<comment type="PTM">
    <text evidence="2">S-nitrosylated; negatively regulates the ATPase activity and the activation of eNOS by HSP90AA1.</text>
</comment>
<comment type="PTM">
    <text evidence="3">Ubiquitinated via 'Lys-63'-linked polyubiquitination by HECTD1. Ubiquitination promotes translocation into the cytoplasm away from the membrane and secretory pathways.</text>
</comment>
<comment type="similarity">
    <text evidence="6">Belongs to the heat shock protein 90 family.</text>
</comment>
<keyword id="KW-0007">Acetylation</keyword>
<keyword id="KW-0067">ATP-binding</keyword>
<keyword id="KW-1003">Cell membrane</keyword>
<keyword id="KW-0143">Chaperone</keyword>
<keyword id="KW-0963">Cytoplasm</keyword>
<keyword id="KW-0378">Hydrolase</keyword>
<keyword id="KW-0472">Membrane</keyword>
<keyword id="KW-0496">Mitochondrion</keyword>
<keyword id="KW-0547">Nucleotide-binding</keyword>
<keyword id="KW-0539">Nucleus</keyword>
<keyword id="KW-0597">Phosphoprotein</keyword>
<keyword id="KW-1185">Reference proteome</keyword>
<keyword id="KW-0702">S-nitrosylation</keyword>
<keyword id="KW-0346">Stress response</keyword>
<keyword id="KW-0832">Ubl conjugation</keyword>
<proteinExistence type="evidence at transcript level"/>
<dbReference type="EC" id="3.6.4.10" evidence="2"/>
<dbReference type="EMBL" id="U94395">
    <property type="protein sequence ID" value="AAC48718.1"/>
    <property type="molecule type" value="mRNA"/>
</dbReference>
<dbReference type="RefSeq" id="NP_999138.1">
    <property type="nucleotide sequence ID" value="NM_213973.2"/>
</dbReference>
<dbReference type="BMRB" id="O02705"/>
<dbReference type="SMR" id="O02705"/>
<dbReference type="BioGRID" id="1149165">
    <property type="interactions" value="3"/>
</dbReference>
<dbReference type="CORUM" id="O02705"/>
<dbReference type="FunCoup" id="O02705">
    <property type="interactions" value="1890"/>
</dbReference>
<dbReference type="STRING" id="9823.ENSSSCP00000046159"/>
<dbReference type="PaxDb" id="9823-ENSSSCP00000002743"/>
<dbReference type="PeptideAtlas" id="O02705"/>
<dbReference type="Ensembl" id="ENSSSCT00025036343.1">
    <property type="protein sequence ID" value="ENSSSCP00025015195.1"/>
    <property type="gene ID" value="ENSSSCG00025026657.1"/>
</dbReference>
<dbReference type="Ensembl" id="ENSSSCT00030052297.1">
    <property type="protein sequence ID" value="ENSSSCP00030023862.1"/>
    <property type="gene ID" value="ENSSSCG00030037509.1"/>
</dbReference>
<dbReference type="Ensembl" id="ENSSSCT00040105032.1">
    <property type="protein sequence ID" value="ENSSSCP00040047983.1"/>
    <property type="gene ID" value="ENSSSCG00040075632.1"/>
</dbReference>
<dbReference type="Ensembl" id="ENSSSCT00050002917.1">
    <property type="protein sequence ID" value="ENSSSCP00050000939.1"/>
    <property type="gene ID" value="ENSSSCG00050002300.1"/>
</dbReference>
<dbReference type="Ensembl" id="ENSSSCT00065099496.1">
    <property type="protein sequence ID" value="ENSSSCP00065043667.1"/>
    <property type="gene ID" value="ENSSSCG00065071916.1"/>
</dbReference>
<dbReference type="Ensembl" id="ENSSSCT00070021746.1">
    <property type="protein sequence ID" value="ENSSSCP00070017996.1"/>
    <property type="gene ID" value="ENSSSCG00070011114.1"/>
</dbReference>
<dbReference type="Ensembl" id="ENSSSCT00085025212">
    <property type="protein sequence ID" value="ENSSSCP00085017519"/>
    <property type="gene ID" value="ENSSSCG00085013274"/>
</dbReference>
<dbReference type="GeneID" id="397028"/>
<dbReference type="KEGG" id="ssc:397028"/>
<dbReference type="CTD" id="3320"/>
<dbReference type="eggNOG" id="KOG0019">
    <property type="taxonomic scope" value="Eukaryota"/>
</dbReference>
<dbReference type="InParanoid" id="O02705"/>
<dbReference type="OrthoDB" id="5426351at2759"/>
<dbReference type="BRENDA" id="3.6.4.10">
    <property type="organism ID" value="6170"/>
</dbReference>
<dbReference type="Reactome" id="R-SSC-1227986">
    <property type="pathway name" value="Signaling by ERBB2"/>
</dbReference>
<dbReference type="Reactome" id="R-SSC-1474151">
    <property type="pathway name" value="Tetrahydrobiopterin (BH4) synthesis, recycling, salvage and regulation"/>
</dbReference>
<dbReference type="Reactome" id="R-SSC-168928">
    <property type="pathway name" value="DDX58/IFIH1-mediated induction of interferon-alpha/beta"/>
</dbReference>
<dbReference type="Reactome" id="R-SSC-2029482">
    <property type="pathway name" value="Regulation of actin dynamics for phagocytic cup formation"/>
</dbReference>
<dbReference type="Reactome" id="R-SSC-203615">
    <property type="pathway name" value="eNOS activation"/>
</dbReference>
<dbReference type="Reactome" id="R-SSC-2565942">
    <property type="pathway name" value="Regulation of PLK1 Activity at G2/M Transition"/>
</dbReference>
<dbReference type="Reactome" id="R-SSC-3371497">
    <property type="pathway name" value="HSP90 chaperone cycle for steroid hormone receptors (SHR) in the presence of ligand"/>
</dbReference>
<dbReference type="Reactome" id="R-SSC-3371511">
    <property type="pathway name" value="HSF1 activation"/>
</dbReference>
<dbReference type="Reactome" id="R-SSC-3371568">
    <property type="pathway name" value="Attenuation phase"/>
</dbReference>
<dbReference type="Reactome" id="R-SSC-3371571">
    <property type="pathway name" value="HSF1-dependent transactivation"/>
</dbReference>
<dbReference type="Reactome" id="R-SSC-380259">
    <property type="pathway name" value="Loss of Nlp from mitotic centrosomes"/>
</dbReference>
<dbReference type="Reactome" id="R-SSC-380270">
    <property type="pathway name" value="Recruitment of mitotic centrosome proteins and complexes"/>
</dbReference>
<dbReference type="Reactome" id="R-SSC-380284">
    <property type="pathway name" value="Loss of proteins required for interphase microtubule organization from the centrosome"/>
</dbReference>
<dbReference type="Reactome" id="R-SSC-380320">
    <property type="pathway name" value="Recruitment of NuMA to mitotic centrosomes"/>
</dbReference>
<dbReference type="Reactome" id="R-SSC-399954">
    <property type="pathway name" value="Sema3A PAK dependent Axon repulsion"/>
</dbReference>
<dbReference type="Reactome" id="R-SSC-4420097">
    <property type="pathway name" value="VEGFA-VEGFR2 Pathway"/>
</dbReference>
<dbReference type="Reactome" id="R-SSC-5218920">
    <property type="pathway name" value="VEGFR2 mediated vascular permeability"/>
</dbReference>
<dbReference type="Reactome" id="R-SSC-5620912">
    <property type="pathway name" value="Anchoring of the basal body to the plasma membrane"/>
</dbReference>
<dbReference type="Reactome" id="R-SSC-5675482">
    <property type="pathway name" value="Regulation of necroptotic cell death"/>
</dbReference>
<dbReference type="Reactome" id="R-SSC-6798695">
    <property type="pathway name" value="Neutrophil degranulation"/>
</dbReference>
<dbReference type="Reactome" id="R-SSC-8852276">
    <property type="pathway name" value="The role of GTSE1 in G2/M progression after G2 checkpoint"/>
</dbReference>
<dbReference type="Reactome" id="R-SSC-8854518">
    <property type="pathway name" value="AURKA Activation by TPX2"/>
</dbReference>
<dbReference type="Reactome" id="R-SSC-8863795">
    <property type="pathway name" value="Downregulation of ERBB2 signaling"/>
</dbReference>
<dbReference type="Reactome" id="R-SSC-8939211">
    <property type="pathway name" value="ESR-mediated signaling"/>
</dbReference>
<dbReference type="Reactome" id="R-SSC-9009391">
    <property type="pathway name" value="Extra-nuclear estrogen signaling"/>
</dbReference>
<dbReference type="Reactome" id="R-SSC-9013418">
    <property type="pathway name" value="RHOBTB2 GTPase cycle"/>
</dbReference>
<dbReference type="Reactome" id="R-SSC-9018519">
    <property type="pathway name" value="Estrogen-dependent gene expression"/>
</dbReference>
<dbReference type="Reactome" id="R-SSC-9652282">
    <property type="pathway name" value="Drug-mediated inhibition of ERBB2 signaling"/>
</dbReference>
<dbReference type="PRO" id="PR:O02705"/>
<dbReference type="Proteomes" id="UP000008227">
    <property type="component" value="Unplaced"/>
</dbReference>
<dbReference type="Proteomes" id="UP000314985">
    <property type="component" value="Chromosome 7"/>
</dbReference>
<dbReference type="Proteomes" id="UP000694570">
    <property type="component" value="Unplaced"/>
</dbReference>
<dbReference type="Proteomes" id="UP000694571">
    <property type="component" value="Unplaced"/>
</dbReference>
<dbReference type="Proteomes" id="UP000694720">
    <property type="component" value="Unplaced"/>
</dbReference>
<dbReference type="Proteomes" id="UP000694722">
    <property type="component" value="Unplaced"/>
</dbReference>
<dbReference type="Proteomes" id="UP000694723">
    <property type="component" value="Unplaced"/>
</dbReference>
<dbReference type="Proteomes" id="UP000694724">
    <property type="component" value="Unplaced"/>
</dbReference>
<dbReference type="Proteomes" id="UP000694725">
    <property type="component" value="Unplaced"/>
</dbReference>
<dbReference type="Proteomes" id="UP000694726">
    <property type="component" value="Unplaced"/>
</dbReference>
<dbReference type="Proteomes" id="UP000694727">
    <property type="component" value="Unplaced"/>
</dbReference>
<dbReference type="Proteomes" id="UP000694728">
    <property type="component" value="Unplaced"/>
</dbReference>
<dbReference type="GO" id="GO:0005737">
    <property type="term" value="C:cytoplasm"/>
    <property type="evidence" value="ECO:0000250"/>
    <property type="project" value="AgBase"/>
</dbReference>
<dbReference type="GO" id="GO:0005829">
    <property type="term" value="C:cytosol"/>
    <property type="evidence" value="ECO:0000318"/>
    <property type="project" value="GO_Central"/>
</dbReference>
<dbReference type="GO" id="GO:0042470">
    <property type="term" value="C:melanosome"/>
    <property type="evidence" value="ECO:0007669"/>
    <property type="project" value="UniProtKB-SubCell"/>
</dbReference>
<dbReference type="GO" id="GO:0005739">
    <property type="term" value="C:mitochondrion"/>
    <property type="evidence" value="ECO:0000250"/>
    <property type="project" value="UniProtKB"/>
</dbReference>
<dbReference type="GO" id="GO:0043209">
    <property type="term" value="C:myelin sheath"/>
    <property type="evidence" value="ECO:0000318"/>
    <property type="project" value="GO_Central"/>
</dbReference>
<dbReference type="GO" id="GO:0043025">
    <property type="term" value="C:neuronal cell body"/>
    <property type="evidence" value="ECO:0000318"/>
    <property type="project" value="GO_Central"/>
</dbReference>
<dbReference type="GO" id="GO:0005634">
    <property type="term" value="C:nucleus"/>
    <property type="evidence" value="ECO:0000250"/>
    <property type="project" value="AgBase"/>
</dbReference>
<dbReference type="GO" id="GO:0048471">
    <property type="term" value="C:perinuclear region of cytoplasm"/>
    <property type="evidence" value="ECO:0000318"/>
    <property type="project" value="GO_Central"/>
</dbReference>
<dbReference type="GO" id="GO:0005886">
    <property type="term" value="C:plasma membrane"/>
    <property type="evidence" value="ECO:0000318"/>
    <property type="project" value="GO_Central"/>
</dbReference>
<dbReference type="GO" id="GO:0032991">
    <property type="term" value="C:protein-containing complex"/>
    <property type="evidence" value="ECO:0000318"/>
    <property type="project" value="GO_Central"/>
</dbReference>
<dbReference type="GO" id="GO:0005524">
    <property type="term" value="F:ATP binding"/>
    <property type="evidence" value="ECO:0000250"/>
    <property type="project" value="UniProtKB"/>
</dbReference>
<dbReference type="GO" id="GO:0016887">
    <property type="term" value="F:ATP hydrolysis activity"/>
    <property type="evidence" value="ECO:0000318"/>
    <property type="project" value="GO_Central"/>
</dbReference>
<dbReference type="GO" id="GO:0140662">
    <property type="term" value="F:ATP-dependent protein folding chaperone"/>
    <property type="evidence" value="ECO:0007669"/>
    <property type="project" value="InterPro"/>
</dbReference>
<dbReference type="GO" id="GO:0030235">
    <property type="term" value="F:nitric-oxide synthase regulator activity"/>
    <property type="evidence" value="ECO:0000250"/>
    <property type="project" value="UniProtKB"/>
</dbReference>
<dbReference type="GO" id="GO:0030911">
    <property type="term" value="F:TPR domain binding"/>
    <property type="evidence" value="ECO:0000250"/>
    <property type="project" value="UniProtKB"/>
</dbReference>
<dbReference type="GO" id="GO:0051082">
    <property type="term" value="F:unfolded protein binding"/>
    <property type="evidence" value="ECO:0000318"/>
    <property type="project" value="GO_Central"/>
</dbReference>
<dbReference type="GO" id="GO:0002218">
    <property type="term" value="P:activation of innate immune response"/>
    <property type="evidence" value="ECO:0000250"/>
    <property type="project" value="UniProtKB"/>
</dbReference>
<dbReference type="GO" id="GO:0034605">
    <property type="term" value="P:cellular response to heat"/>
    <property type="evidence" value="ECO:0000318"/>
    <property type="project" value="GO_Central"/>
</dbReference>
<dbReference type="GO" id="GO:0098586">
    <property type="term" value="P:cellular response to virus"/>
    <property type="evidence" value="ECO:0000250"/>
    <property type="project" value="UniProtKB"/>
</dbReference>
<dbReference type="GO" id="GO:0002230">
    <property type="term" value="P:positive regulation of defense response to virus by host"/>
    <property type="evidence" value="ECO:0000250"/>
    <property type="project" value="UniProtKB"/>
</dbReference>
<dbReference type="GO" id="GO:0032728">
    <property type="term" value="P:positive regulation of interferon-beta production"/>
    <property type="evidence" value="ECO:0000250"/>
    <property type="project" value="UniProtKB"/>
</dbReference>
<dbReference type="GO" id="GO:0045429">
    <property type="term" value="P:positive regulation of nitric oxide biosynthetic process"/>
    <property type="evidence" value="ECO:0000250"/>
    <property type="project" value="UniProtKB"/>
</dbReference>
<dbReference type="GO" id="GO:0006457">
    <property type="term" value="P:protein folding"/>
    <property type="evidence" value="ECO:0000318"/>
    <property type="project" value="GO_Central"/>
</dbReference>
<dbReference type="GO" id="GO:0050821">
    <property type="term" value="P:protein stabilization"/>
    <property type="evidence" value="ECO:0000318"/>
    <property type="project" value="GO_Central"/>
</dbReference>
<dbReference type="GO" id="GO:0042981">
    <property type="term" value="P:regulation of apoptotic process"/>
    <property type="evidence" value="ECO:0000250"/>
    <property type="project" value="UniProtKB"/>
</dbReference>
<dbReference type="GO" id="GO:0046677">
    <property type="term" value="P:response to antibiotic"/>
    <property type="evidence" value="ECO:0000250"/>
    <property type="project" value="AgBase"/>
</dbReference>
<dbReference type="GO" id="GO:0009409">
    <property type="term" value="P:response to cold"/>
    <property type="evidence" value="ECO:0000250"/>
    <property type="project" value="AgBase"/>
</dbReference>
<dbReference type="GO" id="GO:0009408">
    <property type="term" value="P:response to heat"/>
    <property type="evidence" value="ECO:0000250"/>
    <property type="project" value="AgBase"/>
</dbReference>
<dbReference type="CDD" id="cd16927">
    <property type="entry name" value="HATPase_Hsp90-like"/>
    <property type="match status" value="1"/>
</dbReference>
<dbReference type="FunFam" id="1.20.120.790:FF:000001">
    <property type="entry name" value="Heat shock protein 90 alpha"/>
    <property type="match status" value="1"/>
</dbReference>
<dbReference type="FunFam" id="3.30.230.80:FF:000001">
    <property type="entry name" value="Heat shock protein 90 alpha"/>
    <property type="match status" value="1"/>
</dbReference>
<dbReference type="FunFam" id="3.40.50.11260:FF:000001">
    <property type="entry name" value="Heat shock protein 90 alpha"/>
    <property type="match status" value="1"/>
</dbReference>
<dbReference type="FunFam" id="3.30.565.10:FF:000204">
    <property type="entry name" value="Heat shock protein HSP 90-beta"/>
    <property type="match status" value="1"/>
</dbReference>
<dbReference type="Gene3D" id="3.30.230.80">
    <property type="match status" value="1"/>
</dbReference>
<dbReference type="Gene3D" id="3.40.50.11260">
    <property type="match status" value="1"/>
</dbReference>
<dbReference type="Gene3D" id="1.20.120.790">
    <property type="entry name" value="Heat shock protein 90, C-terminal domain"/>
    <property type="match status" value="1"/>
</dbReference>
<dbReference type="Gene3D" id="3.30.565.10">
    <property type="entry name" value="Histidine kinase-like ATPase, C-terminal domain"/>
    <property type="match status" value="1"/>
</dbReference>
<dbReference type="HAMAP" id="MF_00505">
    <property type="entry name" value="HSP90"/>
    <property type="match status" value="1"/>
</dbReference>
<dbReference type="InterPro" id="IPR036890">
    <property type="entry name" value="HATPase_C_sf"/>
</dbReference>
<dbReference type="InterPro" id="IPR019805">
    <property type="entry name" value="Heat_shock_protein_90_CS"/>
</dbReference>
<dbReference type="InterPro" id="IPR037196">
    <property type="entry name" value="HSP90_C"/>
</dbReference>
<dbReference type="InterPro" id="IPR001404">
    <property type="entry name" value="Hsp90_fam"/>
</dbReference>
<dbReference type="InterPro" id="IPR020575">
    <property type="entry name" value="Hsp90_N"/>
</dbReference>
<dbReference type="InterPro" id="IPR020568">
    <property type="entry name" value="Ribosomal_Su5_D2-typ_SF"/>
</dbReference>
<dbReference type="NCBIfam" id="NF003555">
    <property type="entry name" value="PRK05218.1"/>
    <property type="match status" value="1"/>
</dbReference>
<dbReference type="PANTHER" id="PTHR11528">
    <property type="entry name" value="HEAT SHOCK PROTEIN 90 FAMILY MEMBER"/>
    <property type="match status" value="1"/>
</dbReference>
<dbReference type="Pfam" id="PF13589">
    <property type="entry name" value="HATPase_c_3"/>
    <property type="match status" value="1"/>
</dbReference>
<dbReference type="Pfam" id="PF00183">
    <property type="entry name" value="HSP90"/>
    <property type="match status" value="1"/>
</dbReference>
<dbReference type="PIRSF" id="PIRSF002583">
    <property type="entry name" value="Hsp90"/>
    <property type="match status" value="1"/>
</dbReference>
<dbReference type="PRINTS" id="PR00775">
    <property type="entry name" value="HEATSHOCK90"/>
</dbReference>
<dbReference type="SMART" id="SM00387">
    <property type="entry name" value="HATPase_c"/>
    <property type="match status" value="1"/>
</dbReference>
<dbReference type="SUPFAM" id="SSF55874">
    <property type="entry name" value="ATPase domain of HSP90 chaperone/DNA topoisomerase II/histidine kinase"/>
    <property type="match status" value="1"/>
</dbReference>
<dbReference type="SUPFAM" id="SSF110942">
    <property type="entry name" value="HSP90 C-terminal domain"/>
    <property type="match status" value="1"/>
</dbReference>
<dbReference type="SUPFAM" id="SSF54211">
    <property type="entry name" value="Ribosomal protein S5 domain 2-like"/>
    <property type="match status" value="1"/>
</dbReference>
<dbReference type="PROSITE" id="PS00298">
    <property type="entry name" value="HSP90"/>
    <property type="match status" value="1"/>
</dbReference>
<protein>
    <recommendedName>
        <fullName>Heat shock protein HSP 90-alpha</fullName>
        <ecNumber evidence="2">3.6.4.10</ecNumber>
    </recommendedName>
</protein>